<accession>Q9ZFK4</accession>
<evidence type="ECO:0000250" key="1"/>
<evidence type="ECO:0000305" key="2"/>
<evidence type="ECO:0007829" key="3">
    <source>
        <dbReference type="PDB" id="4LU0"/>
    </source>
</evidence>
<reference key="1">
    <citation type="submission" date="1998-10" db="EMBL/GenBank/DDBJ databases">
        <title>kdsA gene of Pseudomonas aeruginosa PAO1.</title>
        <authorList>
            <person name="Walsh A.G."/>
            <person name="Burrows L.L."/>
            <person name="Lam J.S."/>
        </authorList>
    </citation>
    <scope>NUCLEOTIDE SEQUENCE [GENOMIC DNA]</scope>
    <source>
        <strain>ATCC 15692 / DSM 22644 / CIP 104116 / JCM 14847 / LMG 12228 / 1C / PRS 101 / PAO1</strain>
    </source>
</reference>
<reference key="2">
    <citation type="journal article" date="2000" name="Nature">
        <title>Complete genome sequence of Pseudomonas aeruginosa PAO1, an opportunistic pathogen.</title>
        <authorList>
            <person name="Stover C.K."/>
            <person name="Pham X.-Q.T."/>
            <person name="Erwin A.L."/>
            <person name="Mizoguchi S.D."/>
            <person name="Warrener P."/>
            <person name="Hickey M.J."/>
            <person name="Brinkman F.S.L."/>
            <person name="Hufnagle W.O."/>
            <person name="Kowalik D.J."/>
            <person name="Lagrou M."/>
            <person name="Garber R.L."/>
            <person name="Goltry L."/>
            <person name="Tolentino E."/>
            <person name="Westbrock-Wadman S."/>
            <person name="Yuan Y."/>
            <person name="Brody L.L."/>
            <person name="Coulter S.N."/>
            <person name="Folger K.R."/>
            <person name="Kas A."/>
            <person name="Larbig K."/>
            <person name="Lim R.M."/>
            <person name="Smith K.A."/>
            <person name="Spencer D.H."/>
            <person name="Wong G.K.-S."/>
            <person name="Wu Z."/>
            <person name="Paulsen I.T."/>
            <person name="Reizer J."/>
            <person name="Saier M.H. Jr."/>
            <person name="Hancock R.E.W."/>
            <person name="Lory S."/>
            <person name="Olson M.V."/>
        </authorList>
    </citation>
    <scope>NUCLEOTIDE SEQUENCE [LARGE SCALE GENOMIC DNA]</scope>
    <source>
        <strain>ATCC 15692 / DSM 22644 / CIP 104116 / JCM 14847 / LMG 12228 / 1C / PRS 101 / PAO1</strain>
    </source>
</reference>
<protein>
    <recommendedName>
        <fullName>2-dehydro-3-deoxyphosphooctonate aldolase</fullName>
        <ecNumber>2.5.1.55</ecNumber>
    </recommendedName>
    <alternativeName>
        <fullName>3-deoxy-D-manno-octulosonic acid 8-phosphate synthase</fullName>
    </alternativeName>
    <alternativeName>
        <fullName>KDO-8-phosphate synthase</fullName>
        <shortName>KDO 8-P synthase</shortName>
        <shortName>KDOPS</shortName>
    </alternativeName>
    <alternativeName>
        <fullName>Phospho-2-dehydro-3-deoxyoctonate aldolase</fullName>
    </alternativeName>
</protein>
<sequence>MAQKIVRVGDIQIGNDLPFVLFGGMNVLESRDLAMQVCEEYVRVTEKLGIPYVFKASFDKANRSSIHSFRGPGLEEGMKIFEEIKKTFKVPVITDVHEPFQAQPVAEVCDIIQLPAFLSRQTDLVVAMARTNAVINIKKAQFLAPQEMKHILTKCEEAGNDRLILCERGSSFGYNNLVVDMLGFGIMKQFEYPVFFDVTHALQMPGGRADSAGGRRAQVTDLAKAGLSQKLAGLFLEAHPDPEHAKCDGPCALRLNKLEAFLSQLKQLDELIKSFPAIETA</sequence>
<keyword id="KW-0002">3D-structure</keyword>
<keyword id="KW-0963">Cytoplasm</keyword>
<keyword id="KW-0448">Lipopolysaccharide biosynthesis</keyword>
<keyword id="KW-1185">Reference proteome</keyword>
<keyword id="KW-0808">Transferase</keyword>
<proteinExistence type="evidence at protein level"/>
<organism>
    <name type="scientific">Pseudomonas aeruginosa (strain ATCC 15692 / DSM 22644 / CIP 104116 / JCM 14847 / LMG 12228 / 1C / PRS 101 / PAO1)</name>
    <dbReference type="NCBI Taxonomy" id="208964"/>
    <lineage>
        <taxon>Bacteria</taxon>
        <taxon>Pseudomonadati</taxon>
        <taxon>Pseudomonadota</taxon>
        <taxon>Gammaproteobacteria</taxon>
        <taxon>Pseudomonadales</taxon>
        <taxon>Pseudomonadaceae</taxon>
        <taxon>Pseudomonas</taxon>
    </lineage>
</organism>
<gene>
    <name type="primary">kdsA</name>
    <name type="ordered locus">PA3636</name>
</gene>
<comment type="catalytic activity">
    <reaction>
        <text>D-arabinose 5-phosphate + phosphoenolpyruvate + H2O = 3-deoxy-alpha-D-manno-2-octulosonate-8-phosphate + phosphate</text>
        <dbReference type="Rhea" id="RHEA:14053"/>
        <dbReference type="ChEBI" id="CHEBI:15377"/>
        <dbReference type="ChEBI" id="CHEBI:43474"/>
        <dbReference type="ChEBI" id="CHEBI:57693"/>
        <dbReference type="ChEBI" id="CHEBI:58702"/>
        <dbReference type="ChEBI" id="CHEBI:85985"/>
        <dbReference type="EC" id="2.5.1.55"/>
    </reaction>
</comment>
<comment type="pathway">
    <text>Carbohydrate biosynthesis; 3-deoxy-D-manno-octulosonate biosynthesis; 3-deoxy-D-manno-octulosonate from D-ribulose 5-phosphate: step 2/3.</text>
</comment>
<comment type="pathway">
    <text>Bacterial outer membrane biogenesis; lipopolysaccharide biosynthesis.</text>
</comment>
<comment type="subcellular location">
    <subcellularLocation>
        <location evidence="1">Cytoplasm</location>
    </subcellularLocation>
</comment>
<comment type="similarity">
    <text evidence="2">Belongs to the KdsA family.</text>
</comment>
<feature type="chain" id="PRO_0000187150" description="2-dehydro-3-deoxyphosphooctonate aldolase">
    <location>
        <begin position="1"/>
        <end position="281"/>
    </location>
</feature>
<feature type="strand" evidence="3">
    <location>
        <begin position="6"/>
        <end position="8"/>
    </location>
</feature>
<feature type="strand" evidence="3">
    <location>
        <begin position="11"/>
        <end position="13"/>
    </location>
</feature>
<feature type="strand" evidence="3">
    <location>
        <begin position="15"/>
        <end position="17"/>
    </location>
</feature>
<feature type="strand" evidence="3">
    <location>
        <begin position="20"/>
        <end position="27"/>
    </location>
</feature>
<feature type="helix" evidence="3">
    <location>
        <begin position="31"/>
        <end position="48"/>
    </location>
</feature>
<feature type="strand" evidence="3">
    <location>
        <begin position="52"/>
        <end position="58"/>
    </location>
</feature>
<feature type="strand" evidence="3">
    <location>
        <begin position="64"/>
        <end position="68"/>
    </location>
</feature>
<feature type="helix" evidence="3">
    <location>
        <begin position="73"/>
        <end position="88"/>
    </location>
</feature>
<feature type="strand" evidence="3">
    <location>
        <begin position="92"/>
        <end position="95"/>
    </location>
</feature>
<feature type="helix" evidence="3">
    <location>
        <begin position="99"/>
        <end position="101"/>
    </location>
</feature>
<feature type="helix" evidence="3">
    <location>
        <begin position="102"/>
        <end position="108"/>
    </location>
</feature>
<feature type="strand" evidence="3">
    <location>
        <begin position="110"/>
        <end position="114"/>
    </location>
</feature>
<feature type="turn" evidence="3">
    <location>
        <begin position="116"/>
        <end position="120"/>
    </location>
</feature>
<feature type="helix" evidence="3">
    <location>
        <begin position="122"/>
        <end position="130"/>
    </location>
</feature>
<feature type="strand" evidence="3">
    <location>
        <begin position="133"/>
        <end position="139"/>
    </location>
</feature>
<feature type="helix" evidence="3">
    <location>
        <begin position="145"/>
        <end position="147"/>
    </location>
</feature>
<feature type="helix" evidence="3">
    <location>
        <begin position="148"/>
        <end position="157"/>
    </location>
</feature>
<feature type="strand" evidence="3">
    <location>
        <begin position="163"/>
        <end position="167"/>
    </location>
</feature>
<feature type="strand" evidence="3">
    <location>
        <begin position="173"/>
        <end position="175"/>
    </location>
</feature>
<feature type="helix" evidence="3">
    <location>
        <begin position="182"/>
        <end position="188"/>
    </location>
</feature>
<feature type="strand" evidence="3">
    <location>
        <begin position="194"/>
        <end position="198"/>
    </location>
</feature>
<feature type="helix" evidence="3">
    <location>
        <begin position="216"/>
        <end position="227"/>
    </location>
</feature>
<feature type="strand" evidence="3">
    <location>
        <begin position="232"/>
        <end position="237"/>
    </location>
</feature>
<feature type="helix" evidence="3">
    <location>
        <begin position="258"/>
        <end position="273"/>
    </location>
</feature>
<name>KDSA_PSEAE</name>
<dbReference type="EC" id="2.5.1.55"/>
<dbReference type="EMBL" id="AF098791">
    <property type="protein sequence ID" value="AAD13217.1"/>
    <property type="molecule type" value="Genomic_DNA"/>
</dbReference>
<dbReference type="EMBL" id="AE004091">
    <property type="protein sequence ID" value="AAG07024.1"/>
    <property type="molecule type" value="Genomic_DNA"/>
</dbReference>
<dbReference type="PIR" id="A83192">
    <property type="entry name" value="A83192"/>
</dbReference>
<dbReference type="RefSeq" id="NP_252326.1">
    <property type="nucleotide sequence ID" value="NC_002516.2"/>
</dbReference>
<dbReference type="RefSeq" id="WP_003092365.1">
    <property type="nucleotide sequence ID" value="NZ_QZGE01000001.1"/>
</dbReference>
<dbReference type="PDB" id="4LU0">
    <property type="method" value="X-ray"/>
    <property type="resolution" value="2.80 A"/>
    <property type="chains" value="A/B/C/D=2-281"/>
</dbReference>
<dbReference type="PDBsum" id="4LU0"/>
<dbReference type="SMR" id="Q9ZFK4"/>
<dbReference type="FunCoup" id="Q9ZFK4">
    <property type="interactions" value="487"/>
</dbReference>
<dbReference type="STRING" id="208964.PA3636"/>
<dbReference type="PaxDb" id="208964-PA3636"/>
<dbReference type="DNASU" id="880428"/>
<dbReference type="GeneID" id="880428"/>
<dbReference type="KEGG" id="pae:PA3636"/>
<dbReference type="PATRIC" id="fig|208964.12.peg.3805"/>
<dbReference type="PseudoCAP" id="PA3636"/>
<dbReference type="HOGENOM" id="CLU_036666_0_0_6"/>
<dbReference type="InParanoid" id="Q9ZFK4"/>
<dbReference type="OrthoDB" id="9776934at2"/>
<dbReference type="PhylomeDB" id="Q9ZFK4"/>
<dbReference type="BioCyc" id="PAER208964:G1FZ6-3706-MONOMER"/>
<dbReference type="BRENDA" id="2.5.1.55">
    <property type="organism ID" value="5087"/>
</dbReference>
<dbReference type="UniPathway" id="UPA00030"/>
<dbReference type="UniPathway" id="UPA00357">
    <property type="reaction ID" value="UER00474"/>
</dbReference>
<dbReference type="EvolutionaryTrace" id="Q9ZFK4"/>
<dbReference type="Proteomes" id="UP000002438">
    <property type="component" value="Chromosome"/>
</dbReference>
<dbReference type="GO" id="GO:0005829">
    <property type="term" value="C:cytosol"/>
    <property type="evidence" value="ECO:0000318"/>
    <property type="project" value="GO_Central"/>
</dbReference>
<dbReference type="GO" id="GO:0009276">
    <property type="term" value="C:Gram-negative-bacterium-type cell wall"/>
    <property type="evidence" value="ECO:0000314"/>
    <property type="project" value="PseudoCAP"/>
</dbReference>
<dbReference type="GO" id="GO:0016020">
    <property type="term" value="C:membrane"/>
    <property type="evidence" value="ECO:0007669"/>
    <property type="project" value="GOC"/>
</dbReference>
<dbReference type="GO" id="GO:0008676">
    <property type="term" value="F:3-deoxy-8-phosphooctulonate synthase activity"/>
    <property type="evidence" value="ECO:0000318"/>
    <property type="project" value="GO_Central"/>
</dbReference>
<dbReference type="GO" id="GO:0015976">
    <property type="term" value="P:carbon utilization"/>
    <property type="evidence" value="ECO:0000314"/>
    <property type="project" value="PseudoCAP"/>
</dbReference>
<dbReference type="GO" id="GO:0036104">
    <property type="term" value="P:Kdo2-lipid A biosynthetic process"/>
    <property type="evidence" value="ECO:0000314"/>
    <property type="project" value="PseudoCAP"/>
</dbReference>
<dbReference type="GO" id="GO:0019294">
    <property type="term" value="P:keto-3-deoxy-D-manno-octulosonic acid biosynthetic process"/>
    <property type="evidence" value="ECO:0000318"/>
    <property type="project" value="GO_Central"/>
</dbReference>
<dbReference type="GO" id="GO:0009103">
    <property type="term" value="P:lipopolysaccharide biosynthetic process"/>
    <property type="evidence" value="ECO:0000314"/>
    <property type="project" value="PseudoCAP"/>
</dbReference>
<dbReference type="FunFam" id="3.20.20.70:FF:000058">
    <property type="entry name" value="2-dehydro-3-deoxyphosphooctonate aldolase"/>
    <property type="match status" value="1"/>
</dbReference>
<dbReference type="Gene3D" id="3.20.20.70">
    <property type="entry name" value="Aldolase class I"/>
    <property type="match status" value="1"/>
</dbReference>
<dbReference type="HAMAP" id="MF_00056">
    <property type="entry name" value="KDO8P_synth"/>
    <property type="match status" value="1"/>
</dbReference>
<dbReference type="InterPro" id="IPR013785">
    <property type="entry name" value="Aldolase_TIM"/>
</dbReference>
<dbReference type="InterPro" id="IPR006218">
    <property type="entry name" value="DAHP1/KDSA"/>
</dbReference>
<dbReference type="InterPro" id="IPR006269">
    <property type="entry name" value="KDO8P_synthase"/>
</dbReference>
<dbReference type="NCBIfam" id="TIGR01362">
    <property type="entry name" value="KDO8P_synth"/>
    <property type="match status" value="1"/>
</dbReference>
<dbReference type="NCBIfam" id="NF003543">
    <property type="entry name" value="PRK05198.1"/>
    <property type="match status" value="1"/>
</dbReference>
<dbReference type="NCBIfam" id="NF009109">
    <property type="entry name" value="PRK12457.1"/>
    <property type="match status" value="1"/>
</dbReference>
<dbReference type="PANTHER" id="PTHR21057">
    <property type="entry name" value="PHOSPHO-2-DEHYDRO-3-DEOXYHEPTONATE ALDOLASE"/>
    <property type="match status" value="1"/>
</dbReference>
<dbReference type="Pfam" id="PF00793">
    <property type="entry name" value="DAHP_synth_1"/>
    <property type="match status" value="1"/>
</dbReference>
<dbReference type="SUPFAM" id="SSF51569">
    <property type="entry name" value="Aldolase"/>
    <property type="match status" value="1"/>
</dbReference>